<evidence type="ECO:0000250" key="1">
    <source>
        <dbReference type="UniProtKB" id="P24182"/>
    </source>
</evidence>
<evidence type="ECO:0000255" key="2">
    <source>
        <dbReference type="PROSITE-ProRule" id="PRU00409"/>
    </source>
</evidence>
<evidence type="ECO:0000305" key="3"/>
<organism>
    <name type="scientific">Bacillus subtilis (strain 168)</name>
    <dbReference type="NCBI Taxonomy" id="224308"/>
    <lineage>
        <taxon>Bacteria</taxon>
        <taxon>Bacillati</taxon>
        <taxon>Bacillota</taxon>
        <taxon>Bacilli</taxon>
        <taxon>Bacillales</taxon>
        <taxon>Bacillaceae</taxon>
        <taxon>Bacillus</taxon>
    </lineage>
</organism>
<reference key="1">
    <citation type="journal article" date="1997" name="Microbiology">
        <title>Sequence completion, identification and definition of the fengycin operon in Bacillus subtilis 168.</title>
        <authorList>
            <person name="Tosato V."/>
            <person name="Albertini A.M."/>
            <person name="Zotti M."/>
            <person name="Sonda S."/>
            <person name="Bruschi C.V."/>
        </authorList>
    </citation>
    <scope>NUCLEOTIDE SEQUENCE [GENOMIC DNA]</scope>
    <source>
        <strain>168</strain>
    </source>
</reference>
<reference key="2">
    <citation type="journal article" date="1997" name="Nature">
        <title>The complete genome sequence of the Gram-positive bacterium Bacillus subtilis.</title>
        <authorList>
            <person name="Kunst F."/>
            <person name="Ogasawara N."/>
            <person name="Moszer I."/>
            <person name="Albertini A.M."/>
            <person name="Alloni G."/>
            <person name="Azevedo V."/>
            <person name="Bertero M.G."/>
            <person name="Bessieres P."/>
            <person name="Bolotin A."/>
            <person name="Borchert S."/>
            <person name="Borriss R."/>
            <person name="Boursier L."/>
            <person name="Brans A."/>
            <person name="Braun M."/>
            <person name="Brignell S.C."/>
            <person name="Bron S."/>
            <person name="Brouillet S."/>
            <person name="Bruschi C.V."/>
            <person name="Caldwell B."/>
            <person name="Capuano V."/>
            <person name="Carter N.M."/>
            <person name="Choi S.-K."/>
            <person name="Codani J.-J."/>
            <person name="Connerton I.F."/>
            <person name="Cummings N.J."/>
            <person name="Daniel R.A."/>
            <person name="Denizot F."/>
            <person name="Devine K.M."/>
            <person name="Duesterhoeft A."/>
            <person name="Ehrlich S.D."/>
            <person name="Emmerson P.T."/>
            <person name="Entian K.-D."/>
            <person name="Errington J."/>
            <person name="Fabret C."/>
            <person name="Ferrari E."/>
            <person name="Foulger D."/>
            <person name="Fritz C."/>
            <person name="Fujita M."/>
            <person name="Fujita Y."/>
            <person name="Fuma S."/>
            <person name="Galizzi A."/>
            <person name="Galleron N."/>
            <person name="Ghim S.-Y."/>
            <person name="Glaser P."/>
            <person name="Goffeau A."/>
            <person name="Golightly E.J."/>
            <person name="Grandi G."/>
            <person name="Guiseppi G."/>
            <person name="Guy B.J."/>
            <person name="Haga K."/>
            <person name="Haiech J."/>
            <person name="Harwood C.R."/>
            <person name="Henaut A."/>
            <person name="Hilbert H."/>
            <person name="Holsappel S."/>
            <person name="Hosono S."/>
            <person name="Hullo M.-F."/>
            <person name="Itaya M."/>
            <person name="Jones L.-M."/>
            <person name="Joris B."/>
            <person name="Karamata D."/>
            <person name="Kasahara Y."/>
            <person name="Klaerr-Blanchard M."/>
            <person name="Klein C."/>
            <person name="Kobayashi Y."/>
            <person name="Koetter P."/>
            <person name="Koningstein G."/>
            <person name="Krogh S."/>
            <person name="Kumano M."/>
            <person name="Kurita K."/>
            <person name="Lapidus A."/>
            <person name="Lardinois S."/>
            <person name="Lauber J."/>
            <person name="Lazarevic V."/>
            <person name="Lee S.-M."/>
            <person name="Levine A."/>
            <person name="Liu H."/>
            <person name="Masuda S."/>
            <person name="Mauel C."/>
            <person name="Medigue C."/>
            <person name="Medina N."/>
            <person name="Mellado R.P."/>
            <person name="Mizuno M."/>
            <person name="Moestl D."/>
            <person name="Nakai S."/>
            <person name="Noback M."/>
            <person name="Noone D."/>
            <person name="O'Reilly M."/>
            <person name="Ogawa K."/>
            <person name="Ogiwara A."/>
            <person name="Oudega B."/>
            <person name="Park S.-H."/>
            <person name="Parro V."/>
            <person name="Pohl T.M."/>
            <person name="Portetelle D."/>
            <person name="Porwollik S."/>
            <person name="Prescott A.M."/>
            <person name="Presecan E."/>
            <person name="Pujic P."/>
            <person name="Purnelle B."/>
            <person name="Rapoport G."/>
            <person name="Rey M."/>
            <person name="Reynolds S."/>
            <person name="Rieger M."/>
            <person name="Rivolta C."/>
            <person name="Rocha E."/>
            <person name="Roche B."/>
            <person name="Rose M."/>
            <person name="Sadaie Y."/>
            <person name="Sato T."/>
            <person name="Scanlan E."/>
            <person name="Schleich S."/>
            <person name="Schroeter R."/>
            <person name="Scoffone F."/>
            <person name="Sekiguchi J."/>
            <person name="Sekowska A."/>
            <person name="Seror S.J."/>
            <person name="Serror P."/>
            <person name="Shin B.-S."/>
            <person name="Soldo B."/>
            <person name="Sorokin A."/>
            <person name="Tacconi E."/>
            <person name="Takagi T."/>
            <person name="Takahashi H."/>
            <person name="Takemaru K."/>
            <person name="Takeuchi M."/>
            <person name="Tamakoshi A."/>
            <person name="Tanaka T."/>
            <person name="Terpstra P."/>
            <person name="Tognoni A."/>
            <person name="Tosato V."/>
            <person name="Uchiyama S."/>
            <person name="Vandenbol M."/>
            <person name="Vannier F."/>
            <person name="Vassarotti A."/>
            <person name="Viari A."/>
            <person name="Wambutt R."/>
            <person name="Wedler E."/>
            <person name="Wedler H."/>
            <person name="Weitzenegger T."/>
            <person name="Winters P."/>
            <person name="Wipat A."/>
            <person name="Yamamoto H."/>
            <person name="Yamane K."/>
            <person name="Yasumoto K."/>
            <person name="Yata K."/>
            <person name="Yoshida K."/>
            <person name="Yoshikawa H.-F."/>
            <person name="Zumstein E."/>
            <person name="Yoshikawa H."/>
            <person name="Danchin A."/>
        </authorList>
    </citation>
    <scope>NUCLEOTIDE SEQUENCE [LARGE SCALE GENOMIC DNA]</scope>
    <source>
        <strain>168</strain>
    </source>
</reference>
<feature type="chain" id="PRO_0000360841" description="Biotin carboxylase 2">
    <location>
        <begin position="1"/>
        <end position="444"/>
    </location>
</feature>
<feature type="domain" description="Biotin carboxylation">
    <location>
        <begin position="1"/>
        <end position="444"/>
    </location>
</feature>
<feature type="domain" description="ATP-grasp" evidence="2">
    <location>
        <begin position="120"/>
        <end position="317"/>
    </location>
</feature>
<feature type="active site" evidence="1">
    <location>
        <position position="292"/>
    </location>
</feature>
<feature type="binding site" evidence="1">
    <location>
        <position position="116"/>
    </location>
    <ligand>
        <name>ATP</name>
        <dbReference type="ChEBI" id="CHEBI:30616"/>
    </ligand>
</feature>
<feature type="binding site" evidence="1">
    <location>
        <position position="158"/>
    </location>
    <ligand>
        <name>ATP</name>
        <dbReference type="ChEBI" id="CHEBI:30616"/>
    </ligand>
</feature>
<feature type="binding site" evidence="1">
    <location>
        <begin position="164"/>
        <end position="165"/>
    </location>
    <ligand>
        <name>ATP</name>
        <dbReference type="ChEBI" id="CHEBI:30616"/>
    </ligand>
</feature>
<feature type="binding site" evidence="1">
    <location>
        <begin position="200"/>
        <end position="203"/>
    </location>
    <ligand>
        <name>ATP</name>
        <dbReference type="ChEBI" id="CHEBI:30616"/>
    </ligand>
</feature>
<feature type="binding site" evidence="1">
    <location>
        <position position="208"/>
    </location>
    <ligand>
        <name>ATP</name>
        <dbReference type="ChEBI" id="CHEBI:30616"/>
    </ligand>
</feature>
<feature type="binding site" evidence="1">
    <location>
        <position position="235"/>
    </location>
    <ligand>
        <name>ATP</name>
        <dbReference type="ChEBI" id="CHEBI:30616"/>
    </ligand>
</feature>
<feature type="binding site" evidence="1">
    <location>
        <position position="237"/>
    </location>
    <ligand>
        <name>hydrogencarbonate</name>
        <dbReference type="ChEBI" id="CHEBI:17544"/>
    </ligand>
</feature>
<feature type="binding site" evidence="1">
    <location>
        <position position="275"/>
    </location>
    <ligand>
        <name>ATP</name>
        <dbReference type="ChEBI" id="CHEBI:30616"/>
    </ligand>
</feature>
<feature type="binding site" evidence="2">
    <location>
        <position position="275"/>
    </location>
    <ligand>
        <name>Mg(2+)</name>
        <dbReference type="ChEBI" id="CHEBI:18420"/>
        <label>1</label>
    </ligand>
</feature>
<feature type="binding site" evidence="2">
    <location>
        <position position="275"/>
    </location>
    <ligand>
        <name>Mn(2+)</name>
        <dbReference type="ChEBI" id="CHEBI:29035"/>
        <label>1</label>
    </ligand>
</feature>
<feature type="binding site" evidence="1">
    <location>
        <position position="288"/>
    </location>
    <ligand>
        <name>ATP</name>
        <dbReference type="ChEBI" id="CHEBI:30616"/>
    </ligand>
</feature>
<feature type="binding site" evidence="2">
    <location>
        <position position="288"/>
    </location>
    <ligand>
        <name>Mg(2+)</name>
        <dbReference type="ChEBI" id="CHEBI:18420"/>
        <label>1</label>
    </ligand>
</feature>
<feature type="binding site" evidence="2">
    <location>
        <position position="288"/>
    </location>
    <ligand>
        <name>Mg(2+)</name>
        <dbReference type="ChEBI" id="CHEBI:18420"/>
        <label>2</label>
    </ligand>
</feature>
<feature type="binding site" evidence="2">
    <location>
        <position position="288"/>
    </location>
    <ligand>
        <name>Mn(2+)</name>
        <dbReference type="ChEBI" id="CHEBI:29035"/>
        <label>1</label>
    </ligand>
</feature>
<feature type="binding site" evidence="2">
    <location>
        <position position="288"/>
    </location>
    <ligand>
        <name>Mn(2+)</name>
        <dbReference type="ChEBI" id="CHEBI:29035"/>
        <label>2</label>
    </ligand>
</feature>
<feature type="binding site" evidence="2">
    <location>
        <position position="290"/>
    </location>
    <ligand>
        <name>Mg(2+)</name>
        <dbReference type="ChEBI" id="CHEBI:18420"/>
        <label>2</label>
    </ligand>
</feature>
<feature type="binding site" evidence="2">
    <location>
        <position position="290"/>
    </location>
    <ligand>
        <name>Mn(2+)</name>
        <dbReference type="ChEBI" id="CHEBI:29035"/>
        <label>2</label>
    </ligand>
</feature>
<feature type="binding site" evidence="1">
    <location>
        <position position="292"/>
    </location>
    <ligand>
        <name>hydrogencarbonate</name>
        <dbReference type="ChEBI" id="CHEBI:17544"/>
    </ligand>
</feature>
<feature type="binding site" evidence="1">
    <location>
        <position position="295"/>
    </location>
    <ligand>
        <name>hydrogencarbonate</name>
        <dbReference type="ChEBI" id="CHEBI:17544"/>
    </ligand>
</feature>
<feature type="binding site" evidence="1">
    <location>
        <position position="338"/>
    </location>
    <ligand>
        <name>biotin</name>
        <dbReference type="ChEBI" id="CHEBI:57586"/>
    </ligand>
</feature>
<feature type="binding site" evidence="1">
    <location>
        <position position="338"/>
    </location>
    <ligand>
        <name>hydrogencarbonate</name>
        <dbReference type="ChEBI" id="CHEBI:17544"/>
    </ligand>
</feature>
<name>ACCC2_BACSU</name>
<keyword id="KW-0067">ATP-binding</keyword>
<keyword id="KW-0092">Biotin</keyword>
<keyword id="KW-0275">Fatty acid biosynthesis</keyword>
<keyword id="KW-0276">Fatty acid metabolism</keyword>
<keyword id="KW-0436">Ligase</keyword>
<keyword id="KW-0444">Lipid biosynthesis</keyword>
<keyword id="KW-0443">Lipid metabolism</keyword>
<keyword id="KW-0460">Magnesium</keyword>
<keyword id="KW-0464">Manganese</keyword>
<keyword id="KW-0479">Metal-binding</keyword>
<keyword id="KW-0547">Nucleotide-binding</keyword>
<keyword id="KW-1185">Reference proteome</keyword>
<sequence length="444" mass="49087">MFTKVLIANRGEIAMRIIRTCSRLGIKTVAVYSEADKDAPHTKAATEAYLIGESRVSESYLNIERIIKTAKKAKADAIHPGYGLLSENSRFAERCKQENIVFIGPSPDIIAKMGSKIEARKAMEAAGVPVVPGVSESLGDIEAACRTASQIGYPVMLKASAGGGGIGMQRVENEEALKKAYEGNKKRAADFFGDGSMYIEKVIEHARHIEVQLLADQHGHTVHLFERDCSVQRRHQKVIEEAPSPFVDDELRMKIGQTAVKAAKAIGYTNAGTIEFIVDQKQNFYFLEMNTRLQVEHPVTEEITGLDLVEQQLRIAAGHTLTFSQKDIQRNGHAIEVRIYAEDPKTFFPSPGTITAFSLPDQKGVRHECAVAKDSTVTPFYDPMIAKMIVKGQTRTEAIEKLETALRDYRVEGIKTNLPLLIQAAATKAFKEGDVTTDFLKQHL</sequence>
<proteinExistence type="inferred from homology"/>
<comment type="function">
    <text evidence="1">This protein is a component of the acetyl coenzyme A carboxylase complex; first, biotin carboxylase catalyzes the carboxylation of the carrier protein and then the transcarboxylase transfers the carboxyl group to form malonyl-CoA.</text>
</comment>
<comment type="catalytic activity">
    <reaction evidence="1">
        <text>N(6)-biotinyl-L-lysyl-[protein] + hydrogencarbonate + ATP = N(6)-carboxybiotinyl-L-lysyl-[protein] + ADP + phosphate + H(+)</text>
        <dbReference type="Rhea" id="RHEA:13501"/>
        <dbReference type="Rhea" id="RHEA-COMP:10505"/>
        <dbReference type="Rhea" id="RHEA-COMP:10506"/>
        <dbReference type="ChEBI" id="CHEBI:15378"/>
        <dbReference type="ChEBI" id="CHEBI:17544"/>
        <dbReference type="ChEBI" id="CHEBI:30616"/>
        <dbReference type="ChEBI" id="CHEBI:43474"/>
        <dbReference type="ChEBI" id="CHEBI:83144"/>
        <dbReference type="ChEBI" id="CHEBI:83145"/>
        <dbReference type="ChEBI" id="CHEBI:456216"/>
        <dbReference type="EC" id="6.3.4.14"/>
    </reaction>
</comment>
<comment type="cofactor">
    <cofactor evidence="2">
        <name>Mg(2+)</name>
        <dbReference type="ChEBI" id="CHEBI:18420"/>
    </cofactor>
    <cofactor evidence="2">
        <name>Mn(2+)</name>
        <dbReference type="ChEBI" id="CHEBI:29035"/>
    </cofactor>
    <text evidence="2">Binds 2 magnesium or manganese ions per subunit.</text>
</comment>
<comment type="pathway">
    <text evidence="1">Lipid metabolism; malonyl-CoA biosynthesis; malonyl-CoA from acetyl-CoA: step 1/1.</text>
</comment>
<comment type="subunit">
    <text evidence="1">Acetyl-CoA carboxylase is a heterohexamer of biotin carboxyl carrier protein, biotin carboxylase and the two subunits of carboxyl transferase in a 2:2 complex.</text>
</comment>
<dbReference type="EC" id="6.3.4.14" evidence="1"/>
<dbReference type="EMBL" id="Y13917">
    <property type="protein sequence ID" value="CAA74216.1"/>
    <property type="molecule type" value="Genomic_DNA"/>
</dbReference>
<dbReference type="EMBL" id="AL009126">
    <property type="protein sequence ID" value="CAB13707.1"/>
    <property type="molecule type" value="Genomic_DNA"/>
</dbReference>
<dbReference type="PIR" id="E69893">
    <property type="entry name" value="E69893"/>
</dbReference>
<dbReference type="RefSeq" id="WP_003231523.1">
    <property type="nucleotide sequence ID" value="NZ_OZ025638.1"/>
</dbReference>
<dbReference type="SMR" id="O34544"/>
<dbReference type="FunCoup" id="O34544">
    <property type="interactions" value="444"/>
</dbReference>
<dbReference type="STRING" id="224308.BSU18240"/>
<dbReference type="PaxDb" id="224308-BSU18240"/>
<dbReference type="EnsemblBacteria" id="CAB13707">
    <property type="protein sequence ID" value="CAB13707"/>
    <property type="gene ID" value="BSU_18240"/>
</dbReference>
<dbReference type="GeneID" id="939474"/>
<dbReference type="KEGG" id="bsu:BSU18240"/>
<dbReference type="PATRIC" id="fig|224308.179.peg.1990"/>
<dbReference type="eggNOG" id="COG0439">
    <property type="taxonomic scope" value="Bacteria"/>
</dbReference>
<dbReference type="InParanoid" id="O34544"/>
<dbReference type="OrthoDB" id="9807469at2"/>
<dbReference type="PhylomeDB" id="O34544"/>
<dbReference type="BioCyc" id="BSUB:BSU18240-MONOMER"/>
<dbReference type="UniPathway" id="UPA00655">
    <property type="reaction ID" value="UER00711"/>
</dbReference>
<dbReference type="Proteomes" id="UP000001570">
    <property type="component" value="Chromosome"/>
</dbReference>
<dbReference type="GO" id="GO:0003989">
    <property type="term" value="F:acetyl-CoA carboxylase activity"/>
    <property type="evidence" value="ECO:0007669"/>
    <property type="project" value="UniProtKB-EC"/>
</dbReference>
<dbReference type="GO" id="GO:0005524">
    <property type="term" value="F:ATP binding"/>
    <property type="evidence" value="ECO:0007669"/>
    <property type="project" value="UniProtKB-KW"/>
</dbReference>
<dbReference type="GO" id="GO:0004075">
    <property type="term" value="F:biotin carboxylase activity"/>
    <property type="evidence" value="ECO:0007669"/>
    <property type="project" value="UniProtKB-EC"/>
</dbReference>
<dbReference type="GO" id="GO:0046872">
    <property type="term" value="F:metal ion binding"/>
    <property type="evidence" value="ECO:0007669"/>
    <property type="project" value="UniProtKB-KW"/>
</dbReference>
<dbReference type="GO" id="GO:0006633">
    <property type="term" value="P:fatty acid biosynthetic process"/>
    <property type="evidence" value="ECO:0007669"/>
    <property type="project" value="UniProtKB-KW"/>
</dbReference>
<dbReference type="GO" id="GO:2001295">
    <property type="term" value="P:malonyl-CoA biosynthetic process"/>
    <property type="evidence" value="ECO:0007669"/>
    <property type="project" value="UniProtKB-UniPathway"/>
</dbReference>
<dbReference type="FunFam" id="3.30.1490.20:FF:000003">
    <property type="entry name" value="acetyl-CoA carboxylase isoform X1"/>
    <property type="match status" value="1"/>
</dbReference>
<dbReference type="FunFam" id="3.30.470.20:FF:000028">
    <property type="entry name" value="Methylcrotonoyl-CoA carboxylase subunit alpha, mitochondrial"/>
    <property type="match status" value="1"/>
</dbReference>
<dbReference type="FunFam" id="3.40.50.20:FF:000010">
    <property type="entry name" value="Propionyl-CoA carboxylase subunit alpha"/>
    <property type="match status" value="1"/>
</dbReference>
<dbReference type="Gene3D" id="3.30.470.20">
    <property type="entry name" value="ATP-grasp fold, B domain"/>
    <property type="match status" value="1"/>
</dbReference>
<dbReference type="InterPro" id="IPR011761">
    <property type="entry name" value="ATP-grasp"/>
</dbReference>
<dbReference type="InterPro" id="IPR005481">
    <property type="entry name" value="BC-like_N"/>
</dbReference>
<dbReference type="InterPro" id="IPR011764">
    <property type="entry name" value="Biotin_carboxylation_dom"/>
</dbReference>
<dbReference type="InterPro" id="IPR005482">
    <property type="entry name" value="Biotin_COase_C"/>
</dbReference>
<dbReference type="InterPro" id="IPR005479">
    <property type="entry name" value="CbamoylP_synth_lsu-like_ATP-bd"/>
</dbReference>
<dbReference type="InterPro" id="IPR016185">
    <property type="entry name" value="PreATP-grasp_dom_sf"/>
</dbReference>
<dbReference type="InterPro" id="IPR011054">
    <property type="entry name" value="Rudment_hybrid_motif"/>
</dbReference>
<dbReference type="NCBIfam" id="NF006367">
    <property type="entry name" value="PRK08591.1"/>
    <property type="match status" value="1"/>
</dbReference>
<dbReference type="PANTHER" id="PTHR45007">
    <property type="entry name" value="CARBOXYLASE, PUTATIVE (AFU_ORTHOLOGUE AFUA_5G07570)-RELATED"/>
    <property type="match status" value="1"/>
</dbReference>
<dbReference type="PANTHER" id="PTHR45007:SF1">
    <property type="entry name" value="CARBOXYLASE, PUTATIVE (AFU_ORTHOLOGUE AFUA_5G07570)-RELATED"/>
    <property type="match status" value="1"/>
</dbReference>
<dbReference type="Pfam" id="PF02785">
    <property type="entry name" value="Biotin_carb_C"/>
    <property type="match status" value="1"/>
</dbReference>
<dbReference type="Pfam" id="PF00289">
    <property type="entry name" value="Biotin_carb_N"/>
    <property type="match status" value="1"/>
</dbReference>
<dbReference type="Pfam" id="PF02786">
    <property type="entry name" value="CPSase_L_D2"/>
    <property type="match status" value="1"/>
</dbReference>
<dbReference type="SMART" id="SM00878">
    <property type="entry name" value="Biotin_carb_C"/>
    <property type="match status" value="1"/>
</dbReference>
<dbReference type="SUPFAM" id="SSF56059">
    <property type="entry name" value="Glutathione synthetase ATP-binding domain-like"/>
    <property type="match status" value="1"/>
</dbReference>
<dbReference type="SUPFAM" id="SSF52440">
    <property type="entry name" value="PreATP-grasp domain"/>
    <property type="match status" value="1"/>
</dbReference>
<dbReference type="SUPFAM" id="SSF51246">
    <property type="entry name" value="Rudiment single hybrid motif"/>
    <property type="match status" value="1"/>
</dbReference>
<dbReference type="PROSITE" id="PS50975">
    <property type="entry name" value="ATP_GRASP"/>
    <property type="match status" value="1"/>
</dbReference>
<dbReference type="PROSITE" id="PS50979">
    <property type="entry name" value="BC"/>
    <property type="match status" value="1"/>
</dbReference>
<dbReference type="PROSITE" id="PS00866">
    <property type="entry name" value="CPSASE_1"/>
    <property type="match status" value="1"/>
</dbReference>
<dbReference type="PROSITE" id="PS00867">
    <property type="entry name" value="CPSASE_2"/>
    <property type="match status" value="1"/>
</dbReference>
<gene>
    <name type="primary">accC2</name>
    <name type="synonym">accC</name>
    <name type="synonym">yngH</name>
    <name type="ordered locus">BSU18240</name>
</gene>
<accession>O34544</accession>
<accession>Q799L8</accession>
<protein>
    <recommendedName>
        <fullName>Biotin carboxylase 2</fullName>
        <ecNumber evidence="1">6.3.4.14</ecNumber>
    </recommendedName>
    <alternativeName>
        <fullName evidence="3">Acetyl-coenzyme A carboxylase biotin carboxylase subunit A 2</fullName>
    </alternativeName>
</protein>